<comment type="function">
    <text evidence="1">Part of the bsa type III secretion system, is involved in the intracellular replication of invading bacteria inside the host cell. Probably necessary for the lysis of the vacuole membrane and escape into the host cell cytoplasm (By similarity).</text>
</comment>
<comment type="subcellular location">
    <subcellularLocation>
        <location evidence="4">Cell membrane</location>
        <topology evidence="4">Multi-pass membrane protein</topology>
    </subcellularLocation>
</comment>
<comment type="similarity">
    <text evidence="4">Belongs to the type III secretion exporter family.</text>
</comment>
<protein>
    <recommendedName>
        <fullName>Secretion apparatus protein BsaZ</fullName>
    </recommendedName>
</protein>
<sequence length="381" mass="41867">MAEKTEKPTAKKLRDAAKKGQTFKARDIVALVVIATGALSAPALVDLTRVAAEFTRIASTGAQPNPGAYALAWAKLFLRIAAPFVLLCAAVGALPSLVQSRFTLAVESIRFDLTALDPVKGMKRLFSWRSVKDAVKALLYVGVFAITVRVFADLYHHDVFGLFRARPALLGHMWIVLTVRLVLLFLLCALPVLIVDAAVEYFLYHRELKMDKHEVKQEYKESEGNHEIKSKRREIHQELLSEEIKANVEQSDFIVANPTHIAIGIYVNPDIVPIPFVSVRETNARALAVIRHAEACGVPVVRNVALARSIYRNSPRRYSFVNQDDIDGVMRVLIWLKEVEAANRGGPPREMPPEATHAPDAHGGDAASGGATSAQAGERNA</sequence>
<gene>
    <name type="primary">bsaZ</name>
    <name type="ordered locus">BTH_II0839</name>
</gene>
<organism>
    <name type="scientific">Burkholderia thailandensis (strain ATCC 700388 / DSM 13276 / CCUG 48851 / CIP 106301 / E264)</name>
    <dbReference type="NCBI Taxonomy" id="271848"/>
    <lineage>
        <taxon>Bacteria</taxon>
        <taxon>Pseudomonadati</taxon>
        <taxon>Pseudomonadota</taxon>
        <taxon>Betaproteobacteria</taxon>
        <taxon>Burkholderiales</taxon>
        <taxon>Burkholderiaceae</taxon>
        <taxon>Burkholderia</taxon>
        <taxon>pseudomallei group</taxon>
    </lineage>
</organism>
<reference key="1">
    <citation type="journal article" date="2005" name="BMC Genomics">
        <title>Bacterial genome adaptation to niches: divergence of the potential virulence genes in three Burkholderia species of different survival strategies.</title>
        <authorList>
            <person name="Kim H.S."/>
            <person name="Schell M.A."/>
            <person name="Yu Y."/>
            <person name="Ulrich R.L."/>
            <person name="Sarria S.H."/>
            <person name="Nierman W.C."/>
            <person name="DeShazer D."/>
        </authorList>
    </citation>
    <scope>NUCLEOTIDE SEQUENCE [LARGE SCALE GENOMIC DNA]</scope>
    <source>
        <strain>ATCC 700388 / DSM 13276 / CCUG 48851 / CIP 106301 / E264</strain>
    </source>
</reference>
<proteinExistence type="inferred from homology"/>
<keyword id="KW-1003">Cell membrane</keyword>
<keyword id="KW-0472">Membrane</keyword>
<keyword id="KW-0812">Transmembrane</keyword>
<keyword id="KW-1133">Transmembrane helix</keyword>
<keyword id="KW-0843">Virulence</keyword>
<evidence type="ECO:0000250" key="1"/>
<evidence type="ECO:0000255" key="2"/>
<evidence type="ECO:0000256" key="3">
    <source>
        <dbReference type="SAM" id="MobiDB-lite"/>
    </source>
</evidence>
<evidence type="ECO:0000305" key="4"/>
<accession>Q2T713</accession>
<feature type="chain" id="PRO_0000344018" description="Secretion apparatus protein BsaZ">
    <location>
        <begin position="1"/>
        <end position="381"/>
    </location>
</feature>
<feature type="transmembrane region" description="Helical" evidence="2">
    <location>
        <begin position="28"/>
        <end position="48"/>
    </location>
</feature>
<feature type="transmembrane region" description="Helical" evidence="2">
    <location>
        <begin position="80"/>
        <end position="100"/>
    </location>
</feature>
<feature type="transmembrane region" description="Helical" evidence="2">
    <location>
        <begin position="134"/>
        <end position="154"/>
    </location>
</feature>
<feature type="transmembrane region" description="Helical" evidence="2">
    <location>
        <begin position="175"/>
        <end position="195"/>
    </location>
</feature>
<feature type="region of interest" description="Disordered" evidence="3">
    <location>
        <begin position="343"/>
        <end position="381"/>
    </location>
</feature>
<feature type="compositionally biased region" description="Low complexity" evidence="3">
    <location>
        <begin position="364"/>
        <end position="381"/>
    </location>
</feature>
<name>BSAZ_BURTA</name>
<dbReference type="EMBL" id="CP000085">
    <property type="protein sequence ID" value="ABC34818.1"/>
    <property type="molecule type" value="Genomic_DNA"/>
</dbReference>
<dbReference type="RefSeq" id="WP_009896146.1">
    <property type="nucleotide sequence ID" value="NC_007650.1"/>
</dbReference>
<dbReference type="SMR" id="Q2T713"/>
<dbReference type="GeneID" id="45118316"/>
<dbReference type="KEGG" id="bte:BTH_II0839"/>
<dbReference type="HOGENOM" id="CLU_041013_1_3_4"/>
<dbReference type="Proteomes" id="UP000001930">
    <property type="component" value="Chromosome II"/>
</dbReference>
<dbReference type="GO" id="GO:0005886">
    <property type="term" value="C:plasma membrane"/>
    <property type="evidence" value="ECO:0007669"/>
    <property type="project" value="UniProtKB-SubCell"/>
</dbReference>
<dbReference type="GO" id="GO:0009306">
    <property type="term" value="P:protein secretion"/>
    <property type="evidence" value="ECO:0007669"/>
    <property type="project" value="InterPro"/>
</dbReference>
<dbReference type="Gene3D" id="6.10.250.2080">
    <property type="match status" value="1"/>
</dbReference>
<dbReference type="Gene3D" id="3.40.1690.10">
    <property type="entry name" value="secretion proteins EscU"/>
    <property type="match status" value="1"/>
</dbReference>
<dbReference type="InterPro" id="IPR006307">
    <property type="entry name" value="BsaZ-like"/>
</dbReference>
<dbReference type="InterPro" id="IPR006135">
    <property type="entry name" value="T3SS_substrate_exporter"/>
</dbReference>
<dbReference type="InterPro" id="IPR029025">
    <property type="entry name" value="T3SS_substrate_exporter_C"/>
</dbReference>
<dbReference type="NCBIfam" id="TIGR01404">
    <property type="entry name" value="FlhB_rel_III"/>
    <property type="match status" value="1"/>
</dbReference>
<dbReference type="NCBIfam" id="NF006017">
    <property type="entry name" value="PRK08156.1"/>
    <property type="match status" value="1"/>
</dbReference>
<dbReference type="PANTHER" id="PTHR30531">
    <property type="entry name" value="FLAGELLAR BIOSYNTHETIC PROTEIN FLHB"/>
    <property type="match status" value="1"/>
</dbReference>
<dbReference type="PANTHER" id="PTHR30531:SF14">
    <property type="entry name" value="SURFACE PRESENTATION OF ANTIGENS PROTEIN SPAS"/>
    <property type="match status" value="1"/>
</dbReference>
<dbReference type="Pfam" id="PF01312">
    <property type="entry name" value="Bac_export_2"/>
    <property type="match status" value="1"/>
</dbReference>
<dbReference type="PRINTS" id="PR00950">
    <property type="entry name" value="TYPE3IMSPROT"/>
</dbReference>
<dbReference type="SUPFAM" id="SSF160544">
    <property type="entry name" value="EscU C-terminal domain-like"/>
    <property type="match status" value="1"/>
</dbReference>